<evidence type="ECO:0000250" key="1"/>
<evidence type="ECO:0000269" key="2">
    <source>
    </source>
</evidence>
<evidence type="ECO:0000269" key="3">
    <source>
    </source>
</evidence>
<evidence type="ECO:0000269" key="4">
    <source>
    </source>
</evidence>
<evidence type="ECO:0000303" key="5">
    <source>
    </source>
</evidence>
<evidence type="ECO:0000303" key="6">
    <source>
    </source>
</evidence>
<evidence type="ECO:0000305" key="7"/>
<reference key="1">
    <citation type="submission" date="2002-02" db="EMBL/GenBank/DDBJ databases">
        <title>Variation in gene copy number of the human chemokines macrophage inflammatory protein-1a/CCL3 and macrophage inflammatory protein-1b/CCL4.</title>
        <authorList>
            <person name="Nibbs R.J."/>
            <person name="Barcellos L.F."/>
            <person name="Townson J.R."/>
        </authorList>
    </citation>
    <scope>NUCLEOTIDE SEQUENCE [GENOMIC DNA] (ISOFORM 1)</scope>
</reference>
<reference key="2">
    <citation type="journal article" date="2005" name="J. Immunol.">
        <title>Multiple products derived from two CCL4 loci: high incidence of a new polymorphism in HIV+ patients.</title>
        <authorList>
            <person name="Colobran R."/>
            <person name="Adreani P."/>
            <person name="Ashhab Y."/>
            <person name="Llano A."/>
            <person name="Este J.A."/>
            <person name="Dominguez O."/>
            <person name="Pujol-Borrell R."/>
            <person name="Juan M."/>
        </authorList>
    </citation>
    <scope>NUCLEOTIDE SEQUENCE [GENOMIC DNA / MRNA] (ISOFORMS 1; 2; 3; 4; 5; 6; 7; 8; 9 AND 10)</scope>
</reference>
<reference key="3">
    <citation type="journal article" date="2004" name="Genome Res.">
        <title>The status, quality, and expansion of the NIH full-length cDNA project: the Mammalian Gene Collection (MGC).</title>
        <authorList>
            <consortium name="The MGC Project Team"/>
        </authorList>
    </citation>
    <scope>NUCLEOTIDE SEQUENCE [LARGE SCALE MRNA] (ISOFORMS 1 AND 5)</scope>
    <source>
        <tissue>Blood</tissue>
        <tissue>Brain</tissue>
    </source>
</reference>
<reference key="4">
    <citation type="journal article" date="2001" name="Immunogenetics">
        <title>The human MIP-1beta chemokine is encoded by two paralogous genes, ACT-2 and LAG-1.</title>
        <authorList>
            <person name="Modi W.S."/>
            <person name="Bergeron J."/>
            <person name="Sanford M."/>
        </authorList>
    </citation>
    <scope>IDENTIFICATION</scope>
</reference>
<reference key="5">
    <citation type="journal article" date="2004" name="Biochem. Biophys. Res. Commun.">
        <title>Functional redundancy of the human CCL4 and CCL4L1 chemokine genes.</title>
        <authorList>
            <person name="Howard O.M.Z."/>
            <person name="Turpin J.A."/>
            <person name="Goldman R."/>
            <person name="Modi W.S."/>
        </authorList>
    </citation>
    <scope>FUNCTION</scope>
    <scope>INTERACTION WITH CCR5</scope>
    <scope>GENOMIC DUPLICATION</scope>
</reference>
<reference key="6">
    <citation type="journal article" date="2004" name="Genomics">
        <title>CCL3L1 and CCL4L1 chemokine genes are located in a segmental duplication at chromosome 17q12.</title>
        <authorList>
            <person name="Modi W.S."/>
        </authorList>
    </citation>
    <scope>IDENTIFICATION</scope>
    <scope>GENOMIC DUPLICATION</scope>
</reference>
<reference key="7">
    <citation type="journal article" date="2004" name="Immunogenetics">
        <title>Independent expression of the two paralogous CCL4 genes in monocytes and B lymphocytes.</title>
        <authorList>
            <person name="Lu J."/>
            <person name="Honczarenko M."/>
            <person name="Sloan S.R."/>
        </authorList>
    </citation>
    <scope>TISSUE SPECIFICITY</scope>
</reference>
<reference key="8">
    <citation type="journal article" date="2007" name="Genes Immun.">
        <title>CCL3L1 and CCL4L1: variable gene copy number in adolescents with and without human immunodeficiency virus type 1 (HIV-1) infection.</title>
        <authorList>
            <person name="Shao W."/>
            <person name="Tang J."/>
            <person name="Song W."/>
            <person name="Wang C."/>
            <person name="Li Y."/>
            <person name="Wilson C.M."/>
            <person name="Kaslow R.A."/>
        </authorList>
    </citation>
    <scope>IDENTIFICATION</scope>
    <scope>POLYMORPHISM OF GENE COPY NUMBER</scope>
</reference>
<feature type="signal peptide" evidence="1">
    <location>
        <begin position="1"/>
        <end position="23"/>
    </location>
</feature>
<feature type="chain" id="PRO_0000326234" description="C-C motif chemokine 4-like">
    <location>
        <begin position="24"/>
        <end position="92"/>
    </location>
</feature>
<feature type="disulfide bond" evidence="1">
    <location>
        <begin position="34"/>
        <end position="58"/>
    </location>
</feature>
<feature type="disulfide bond" evidence="1">
    <location>
        <begin position="35"/>
        <end position="74"/>
    </location>
</feature>
<feature type="splice variant" id="VSP_032625" description="In isoform 7." evidence="6">
    <original>MGSDPPTACCFSYTARKLPRNFVVDYYETSSLCSQPAVVFQTKRGKQVCADPSESWVQEYVYDLELN</original>
    <variation>KASKSALTPVSPGSRSTCMTWN</variation>
    <location>
        <begin position="26"/>
        <end position="92"/>
    </location>
</feature>
<feature type="splice variant" id="VSP_032626" description="In isoform 8." evidence="6">
    <original>MGSDPPTACCFSYTARKLPRNFVVDYYETSSLCSQPAVVFQTKRGKQVCADPSESWVQEYVYDLELN</original>
    <variation>NSKPKEASKSALTPVSPGSRSTCMTWN</variation>
    <location>
        <begin position="26"/>
        <end position="92"/>
    </location>
</feature>
<feature type="splice variant" id="VSP_032627" description="In isoform 9." evidence="6">
    <original>MGSDPPTACCFSYTARKLPRNFVVDYYETSSLCSQPAVVFQTKRGKQVCADPSESWVQEYVYDLELN</original>
    <variation>TKSSEWKLQGVCFQCCSGKDPIHQSCPTWTMVRQRKMPTTGKG</variation>
    <location>
        <begin position="26"/>
        <end position="92"/>
    </location>
</feature>
<feature type="splice variant" id="VSP_032628" description="In isoform 10." evidence="6">
    <original>FQTKRGKQVCADPSESWVQEYVYDLELN</original>
    <variation>YRESASSAAPGRIPSTRAAPHGPWSGRGRCLPQARDKAR</variation>
    <location>
        <begin position="65"/>
        <end position="92"/>
    </location>
</feature>
<feature type="splice variant" id="VSP_032629" description="In isoform 3." evidence="6">
    <original>FQTKRGKQVCADPSESWVQEYVYDLELN</original>
    <variation>AAPGRIPSTRAAPHGPWSGRGRCLPQARDKAR</variation>
    <location>
        <begin position="65"/>
        <end position="92"/>
    </location>
</feature>
<feature type="splice variant" id="VSP_032630" description="In isoform 4." evidence="6">
    <original>FQTKRGKQVCADPSESWVQEYVYDLELN</original>
    <variation>EWKLQGVCFQCCSGKDPIHQSCPTWTMVRQRKMPTTGKG</variation>
    <location>
        <begin position="65"/>
        <end position="92"/>
    </location>
</feature>
<feature type="splice variant" id="VSP_032631" description="In isoform 5." evidence="5 6">
    <location>
        <begin position="65"/>
        <end position="92"/>
    </location>
</feature>
<feature type="splice variant" id="VSP_032632" description="In isoform 6." evidence="6">
    <original>FQTKRGKQVCADPSESWVQEYVYDLELN</original>
    <variation>AAPHGPWSGRGRCLPQARDKAR</variation>
    <location>
        <begin position="65"/>
        <end position="92"/>
    </location>
</feature>
<feature type="splice variant" id="VSP_032633" description="In isoform 2." evidence="6">
    <location>
        <begin position="65"/>
        <end position="69"/>
    </location>
</feature>
<feature type="sequence conflict" description="In Ref. 3; AAH70310." evidence="7" ref="3">
    <original>R</original>
    <variation>H</variation>
    <location>
        <position position="45"/>
    </location>
</feature>
<organism>
    <name type="scientific">Homo sapiens</name>
    <name type="common">Human</name>
    <dbReference type="NCBI Taxonomy" id="9606"/>
    <lineage>
        <taxon>Eukaryota</taxon>
        <taxon>Metazoa</taxon>
        <taxon>Chordata</taxon>
        <taxon>Craniata</taxon>
        <taxon>Vertebrata</taxon>
        <taxon>Euteleostomi</taxon>
        <taxon>Mammalia</taxon>
        <taxon>Eutheria</taxon>
        <taxon>Euarchontoglires</taxon>
        <taxon>Primates</taxon>
        <taxon>Haplorrhini</taxon>
        <taxon>Catarrhini</taxon>
        <taxon>Hominidae</taxon>
        <taxon>Homo</taxon>
    </lineage>
</organism>
<protein>
    <recommendedName>
        <fullName>C-C motif chemokine 4-like</fullName>
    </recommendedName>
    <alternativeName>
        <fullName>Lymphocyte activation gene 1 protein</fullName>
        <shortName>LAG-1</shortName>
    </alternativeName>
    <alternativeName>
        <fullName>Macrophage inflammatory protein 1-beta</fullName>
        <shortName>MIP-1-beta</shortName>
    </alternativeName>
    <alternativeName>
        <fullName>Monocyte adherence-induced protein 5-alpha</fullName>
    </alternativeName>
    <alternativeName>
        <fullName>Small-inducible cytokine A4-like</fullName>
    </alternativeName>
</protein>
<proteinExistence type="evidence at protein level"/>
<comment type="function">
    <text evidence="3">Chemokine that induces chemotaxis of cells expressing CCR5 or CCR1. Inhibits HIV replication in peripheral blood monocytes that express CCR5.</text>
</comment>
<comment type="subunit">
    <text evidence="3">Interacts with CCR5.</text>
</comment>
<comment type="interaction">
    <interactant intactId="EBI-10271156">
        <id>Q8NHW4</id>
    </interactant>
    <interactant intactId="EBI-13059134">
        <id>Q13520</id>
        <label>AQP6</label>
    </interactant>
    <organismsDiffer>false</organismsDiffer>
    <experiments>3</experiments>
</comment>
<comment type="interaction">
    <interactant intactId="EBI-10271156">
        <id>Q8NHW4</id>
    </interactant>
    <interactant intactId="EBI-11343438">
        <id>Q3SXY8</id>
        <label>ARL13B</label>
    </interactant>
    <organismsDiffer>false</organismsDiffer>
    <experiments>3</experiments>
</comment>
<comment type="interaction">
    <interactant intactId="EBI-10271156">
        <id>Q8NHW4</id>
    </interactant>
    <interactant intactId="EBI-21541251">
        <id>Q7RTX7</id>
        <label>CATSPER4</label>
    </interactant>
    <organismsDiffer>false</organismsDiffer>
    <experiments>3</experiments>
</comment>
<comment type="interaction">
    <interactant intactId="EBI-10271156">
        <id>Q8NHW4</id>
    </interactant>
    <interactant intactId="EBI-2622997">
        <id>Q9HA82</id>
        <label>CERS4</label>
    </interactant>
    <organismsDiffer>false</organismsDiffer>
    <experiments>3</experiments>
</comment>
<comment type="interaction">
    <interactant intactId="EBI-10271156">
        <id>Q8NHW4</id>
    </interactant>
    <interactant intactId="EBI-17274839">
        <id>P58418</id>
        <label>CLRN1</label>
    </interactant>
    <organismsDiffer>false</organismsDiffer>
    <experiments>3</experiments>
</comment>
<comment type="interaction">
    <interactant intactId="EBI-10271156">
        <id>Q8NHW4</id>
    </interactant>
    <interactant intactId="EBI-372265">
        <id>P21964</id>
        <label>COMT</label>
    </interactant>
    <organismsDiffer>false</organismsDiffer>
    <experiments>3</experiments>
</comment>
<comment type="interaction">
    <interactant intactId="EBI-10271156">
        <id>Q8NHW4</id>
    </interactant>
    <interactant intactId="EBI-724524">
        <id>O75208</id>
        <label>COQ9</label>
    </interactant>
    <organismsDiffer>false</organismsDiffer>
    <experiments>3</experiments>
</comment>
<comment type="interaction">
    <interactant intactId="EBI-10271156">
        <id>Q8NHW4</id>
    </interactant>
    <interactant intactId="EBI-18013275">
        <id>Q7Z7G2</id>
        <label>CPLX4</label>
    </interactant>
    <organismsDiffer>false</organismsDiffer>
    <experiments>3</experiments>
</comment>
<comment type="interaction">
    <interactant intactId="EBI-10271156">
        <id>Q8NHW4</id>
    </interactant>
    <interactant intactId="EBI-6942903">
        <id>Q96BA8</id>
        <label>CREB3L1</label>
    </interactant>
    <organismsDiffer>false</organismsDiffer>
    <experiments>3</experiments>
</comment>
<comment type="interaction">
    <interactant intactId="EBI-10271156">
        <id>Q8NHW4</id>
    </interactant>
    <interactant intactId="EBI-3915253">
        <id>Q15125</id>
        <label>EBP</label>
    </interactant>
    <organismsDiffer>false</organismsDiffer>
    <experiments>3</experiments>
</comment>
<comment type="interaction">
    <interactant intactId="EBI-10271156">
        <id>Q8NHW4</id>
    </interactant>
    <interactant intactId="EBI-18535450">
        <id>Q9GZR5</id>
        <label>ELOVL4</label>
    </interactant>
    <organismsDiffer>false</organismsDiffer>
    <experiments>3</experiments>
</comment>
<comment type="interaction">
    <interactant intactId="EBI-10271156">
        <id>Q8NHW4</id>
    </interactant>
    <interactant intactId="EBI-17973325">
        <id>P60508</id>
        <label>ERVFRD-1</label>
    </interactant>
    <organismsDiffer>false</organismsDiffer>
    <experiments>3</experiments>
</comment>
<comment type="interaction">
    <interactant intactId="EBI-10271156">
        <id>Q8NHW4</id>
    </interactant>
    <interactant intactId="EBI-18304435">
        <id>Q5JX71</id>
        <label>FAM209A</label>
    </interactant>
    <organismsDiffer>false</organismsDiffer>
    <experiments>3</experiments>
</comment>
<comment type="interaction">
    <interactant intactId="EBI-10271156">
        <id>Q8NHW4</id>
    </interactant>
    <interactant intactId="EBI-18908258">
        <id>O00258</id>
        <label>GET1</label>
    </interactant>
    <organismsDiffer>false</organismsDiffer>
    <experiments>3</experiments>
</comment>
<comment type="interaction">
    <interactant intactId="EBI-10271156">
        <id>Q8NHW4</id>
    </interactant>
    <interactant intactId="EBI-13345167">
        <id>Q8TDT2</id>
        <label>GPR152</label>
    </interactant>
    <organismsDiffer>false</organismsDiffer>
    <experiments>3</experiments>
</comment>
<comment type="interaction">
    <interactant intactId="EBI-10271156">
        <id>Q8NHW4</id>
    </interactant>
    <interactant intactId="EBI-18076404">
        <id>O15529</id>
        <label>GPR42</label>
    </interactant>
    <organismsDiffer>false</organismsDiffer>
    <experiments>3</experiments>
</comment>
<comment type="interaction">
    <interactant intactId="EBI-10271156">
        <id>Q8NHW4</id>
    </interactant>
    <interactant intactId="EBI-12811565">
        <id>Q9NQX7-3</id>
        <label>ITM2C</label>
    </interactant>
    <organismsDiffer>false</organismsDiffer>
    <experiments>3</experiments>
</comment>
<comment type="interaction">
    <interactant intactId="EBI-10271156">
        <id>Q8NHW4</id>
    </interactant>
    <interactant intactId="EBI-10266796">
        <id>Q8N5M9</id>
        <label>JAGN1</label>
    </interactant>
    <organismsDiffer>false</organismsDiffer>
    <experiments>3</experiments>
</comment>
<comment type="interaction">
    <interactant intactId="EBI-10271156">
        <id>Q8NHW4</id>
    </interactant>
    <interactant intactId="EBI-373355">
        <id>Q5SR56</id>
        <label>MFSD14B</label>
    </interactant>
    <organismsDiffer>false</organismsDiffer>
    <experiments>3</experiments>
</comment>
<comment type="interaction">
    <interactant intactId="EBI-10271156">
        <id>Q8NHW4</id>
    </interactant>
    <interactant intactId="EBI-3920969">
        <id>Q6N075</id>
        <label>MFSD5</label>
    </interactant>
    <organismsDiffer>false</organismsDiffer>
    <experiments>3</experiments>
</comment>
<comment type="interaction">
    <interactant intactId="EBI-10271156">
        <id>Q8NHW4</id>
    </interactant>
    <interactant intactId="EBI-5454865">
        <id>Q6IN84</id>
        <label>MRM1</label>
    </interactant>
    <organismsDiffer>false</organismsDiffer>
    <experiments>3</experiments>
</comment>
<comment type="interaction">
    <interactant intactId="EBI-10271156">
        <id>Q8NHW4</id>
    </interactant>
    <interactant intactId="EBI-7545592">
        <id>Q9H6H4</id>
        <label>REEP4</label>
    </interactant>
    <organismsDiffer>false</organismsDiffer>
    <experiments>3</experiments>
</comment>
<comment type="interaction">
    <interactant intactId="EBI-10271156">
        <id>Q8NHW4</id>
    </interactant>
    <interactant intactId="EBI-10192441">
        <id>Q86VR2</id>
        <label>RETREG3</label>
    </interactant>
    <organismsDiffer>false</organismsDiffer>
    <experiments>3</experiments>
</comment>
<comment type="interaction">
    <interactant intactId="EBI-10271156">
        <id>Q8NHW4</id>
    </interactant>
    <interactant intactId="EBI-1046170">
        <id>O95470</id>
        <label>SGPL1</label>
    </interactant>
    <organismsDiffer>false</organismsDiffer>
    <experiments>3</experiments>
</comment>
<comment type="interaction">
    <interactant intactId="EBI-10271156">
        <id>Q8NHW4</id>
    </interactant>
    <interactant intactId="EBI-18114847">
        <id>Q12908</id>
        <label>SLC10A2</label>
    </interactant>
    <organismsDiffer>false</organismsDiffer>
    <experiments>3</experiments>
</comment>
<comment type="interaction">
    <interactant intactId="EBI-10271156">
        <id>Q8NHW4</id>
    </interactant>
    <interactant intactId="EBI-17595455">
        <id>P54219-3</id>
        <label>SLC18A1</label>
    </interactant>
    <organismsDiffer>false</organismsDiffer>
    <experiments>3</experiments>
</comment>
<comment type="interaction">
    <interactant intactId="EBI-10271156">
        <id>Q8NHW4</id>
    </interactant>
    <interactant intactId="EBI-8644112">
        <id>Q9BRI3</id>
        <label>SLC30A2</label>
    </interactant>
    <organismsDiffer>false</organismsDiffer>
    <experiments>3</experiments>
</comment>
<comment type="interaction">
    <interactant intactId="EBI-10271156">
        <id>Q8NHW4</id>
    </interactant>
    <interactant intactId="EBI-4289564">
        <id>P30825</id>
        <label>SLC7A1</label>
    </interactant>
    <organismsDiffer>false</organismsDiffer>
    <experiments>3</experiments>
</comment>
<comment type="interaction">
    <interactant intactId="EBI-10271156">
        <id>Q8NHW4</id>
    </interactant>
    <interactant intactId="EBI-5235586">
        <id>Q8TBB6</id>
        <label>SLC7A14</label>
    </interactant>
    <organismsDiffer>false</organismsDiffer>
    <experiments>3</experiments>
</comment>
<comment type="interaction">
    <interactant intactId="EBI-10271156">
        <id>Q8NHW4</id>
    </interactant>
    <interactant intactId="EBI-17280858">
        <id>Q8WWF3</id>
        <label>SSMEM1</label>
    </interactant>
    <organismsDiffer>false</organismsDiffer>
    <experiments>3</experiments>
</comment>
<comment type="interaction">
    <interactant intactId="EBI-10271156">
        <id>Q8NHW4</id>
    </interactant>
    <interactant intactId="EBI-11724423">
        <id>Q7Z7N9</id>
        <label>TMEM179B</label>
    </interactant>
    <organismsDiffer>false</organismsDiffer>
    <experiments>3</experiments>
</comment>
<comment type="interaction">
    <interactant intactId="EBI-10271156">
        <id>Q8NHW4</id>
    </interactant>
    <interactant intactId="EBI-726044">
        <id>Q9NW97</id>
        <label>TMEM51</label>
    </interactant>
    <organismsDiffer>false</organismsDiffer>
    <experiments>3</experiments>
</comment>
<comment type="interaction">
    <interactant intactId="EBI-10271156">
        <id>Q8NHW4</id>
    </interactant>
    <interactant intactId="EBI-744988">
        <id>Q9H7M9</id>
        <label>VSIR</label>
    </interactant>
    <organismsDiffer>false</organismsDiffer>
    <experiments>3</experiments>
</comment>
<comment type="subcellular location">
    <subcellularLocation>
        <location evidence="1">Secreted</location>
    </subcellularLocation>
</comment>
<comment type="alternative products">
    <event type="alternative splicing"/>
    <isoform>
        <id>Q8NHW4-1</id>
        <name>1</name>
        <sequence type="displayed"/>
    </isoform>
    <isoform>
        <id>Q8NHW4-2</id>
        <name>2</name>
        <name>CCL4L2</name>
        <sequence type="described" ref="VSP_032633"/>
    </isoform>
    <isoform>
        <id>Q8NHW4-3</id>
        <name>3</name>
        <name>CC4L2d</name>
        <sequence type="described" ref="VSP_032629"/>
    </isoform>
    <isoform>
        <id>Q8NHW4-4</id>
        <name>4</name>
        <name>CC4L2f</name>
        <sequence type="described" ref="VSP_032630"/>
    </isoform>
    <isoform>
        <id>Q8NHW4-5</id>
        <name>5</name>
        <name>CC4L2b1</name>
        <name>CC4L2b2</name>
        <sequence type="described" ref="VSP_032631"/>
    </isoform>
    <isoform>
        <id>Q8NHW4-6</id>
        <name>6</name>
        <name>CC4L2e</name>
        <sequence type="described" ref="VSP_032632"/>
    </isoform>
    <isoform>
        <id>Q8NHW4-7</id>
        <name>7</name>
        <name>CC4L2d2</name>
        <sequence type="described" ref="VSP_032625"/>
    </isoform>
    <isoform>
        <id>Q8NHW4-8</id>
        <name>8</name>
        <name>CC4L1d2</name>
        <sequence type="described" ref="VSP_032626"/>
    </isoform>
    <isoform>
        <id>Q8NHW4-9</id>
        <name>9</name>
        <name>CC4L2bd2</name>
        <sequence type="described" ref="VSP_032627"/>
    </isoform>
    <isoform>
        <id>Q8NHW4-10</id>
        <name>10</name>
        <name>CC44L2c</name>
        <sequence type="described" ref="VSP_032628"/>
    </isoform>
    <text>CCL4L1 and CCL4L2 genes differ in their non-coding regions. Thus, alternative splicing events differ between the two genes.</text>
</comment>
<comment type="tissue specificity">
    <text evidence="2">Detected in B-cells.</text>
</comment>
<comment type="polymorphism">
    <text evidence="4">The copy number of the CC4L1 gene varies among individuals; most individuals have 1 to 6 copies in the diploid genome.</text>
</comment>
<comment type="similarity">
    <text evidence="7">Belongs to the intercrine beta (chemokine CC) family.</text>
</comment>
<name>CC4L_HUMAN</name>
<dbReference type="EMBL" id="AY079147">
    <property type="protein sequence ID" value="AAL87008.1"/>
    <property type="molecule type" value="Genomic_DNA"/>
</dbReference>
<dbReference type="EMBL" id="AY766460">
    <property type="protein sequence ID" value="AAX07294.1"/>
    <property type="molecule type" value="Genomic_DNA"/>
</dbReference>
<dbReference type="EMBL" id="AY766460">
    <property type="protein sequence ID" value="AAX07295.1"/>
    <property type="molecule type" value="Genomic_DNA"/>
</dbReference>
<dbReference type="EMBL" id="AY766461">
    <property type="protein sequence ID" value="AAX07296.1"/>
    <property type="molecule type" value="Genomic_DNA"/>
</dbReference>
<dbReference type="EMBL" id="AY766461">
    <property type="protein sequence ID" value="AAX07297.1"/>
    <property type="molecule type" value="Genomic_DNA"/>
</dbReference>
<dbReference type="EMBL" id="AY766461">
    <property type="protein sequence ID" value="AAX07298.1"/>
    <property type="molecule type" value="Genomic_DNA"/>
</dbReference>
<dbReference type="EMBL" id="AY766461">
    <property type="protein sequence ID" value="AAX07299.1"/>
    <property type="molecule type" value="Genomic_DNA"/>
</dbReference>
<dbReference type="EMBL" id="AY766461">
    <property type="protein sequence ID" value="AAX07300.1"/>
    <property type="molecule type" value="Genomic_DNA"/>
</dbReference>
<dbReference type="EMBL" id="AY766461">
    <property type="protein sequence ID" value="AAX07301.1"/>
    <property type="molecule type" value="Genomic_DNA"/>
</dbReference>
<dbReference type="EMBL" id="AY766461">
    <property type="protein sequence ID" value="AAX07302.1"/>
    <property type="molecule type" value="Genomic_DNA"/>
</dbReference>
<dbReference type="EMBL" id="AY766461">
    <property type="protein sequence ID" value="AAX07303.1"/>
    <property type="molecule type" value="Genomic_DNA"/>
</dbReference>
<dbReference type="EMBL" id="AY766461">
    <property type="protein sequence ID" value="AAX07304.1"/>
    <property type="molecule type" value="Genomic_DNA"/>
</dbReference>
<dbReference type="EMBL" id="AY766447">
    <property type="protein sequence ID" value="AAX07306.1"/>
    <property type="molecule type" value="mRNA"/>
</dbReference>
<dbReference type="EMBL" id="AY766449">
    <property type="protein sequence ID" value="AAX07308.1"/>
    <property type="molecule type" value="mRNA"/>
</dbReference>
<dbReference type="EMBL" id="AY766450">
    <property type="protein sequence ID" value="AAX07309.1"/>
    <property type="molecule type" value="mRNA"/>
</dbReference>
<dbReference type="EMBL" id="AY766451">
    <property type="protein sequence ID" value="AAX07310.1"/>
    <property type="molecule type" value="mRNA"/>
</dbReference>
<dbReference type="EMBL" id="AY766452">
    <property type="protein sequence ID" value="AAX07311.1"/>
    <property type="molecule type" value="mRNA"/>
</dbReference>
<dbReference type="EMBL" id="AY766453">
    <property type="protein sequence ID" value="AAX07312.1"/>
    <property type="molecule type" value="mRNA"/>
</dbReference>
<dbReference type="EMBL" id="AY766454">
    <property type="protein sequence ID" value="AAX07313.1"/>
    <property type="molecule type" value="mRNA"/>
</dbReference>
<dbReference type="EMBL" id="AY766455">
    <property type="protein sequence ID" value="AAX07314.1"/>
    <property type="molecule type" value="mRNA"/>
</dbReference>
<dbReference type="EMBL" id="AY766456">
    <property type="protein sequence ID" value="AAX07315.1"/>
    <property type="molecule type" value="mRNA"/>
</dbReference>
<dbReference type="EMBL" id="AY766457">
    <property type="protein sequence ID" value="AAX07316.1"/>
    <property type="molecule type" value="mRNA"/>
</dbReference>
<dbReference type="EMBL" id="AY766458">
    <property type="protein sequence ID" value="AAX07317.1"/>
    <property type="molecule type" value="mRNA"/>
</dbReference>
<dbReference type="EMBL" id="BC070310">
    <property type="protein sequence ID" value="AAH70310.1"/>
    <property type="molecule type" value="mRNA"/>
</dbReference>
<dbReference type="EMBL" id="BC092445">
    <property type="protein sequence ID" value="AAH92445.1"/>
    <property type="molecule type" value="mRNA"/>
</dbReference>
<dbReference type="EMBL" id="BC130456">
    <property type="protein sequence ID" value="AAI30457.1"/>
    <property type="molecule type" value="mRNA"/>
</dbReference>
<dbReference type="EMBL" id="BC130458">
    <property type="protein sequence ID" value="AAI30459.1"/>
    <property type="molecule type" value="mRNA"/>
</dbReference>
<dbReference type="EMBL" id="BC144393">
    <property type="protein sequence ID" value="AAI44394.1"/>
    <property type="molecule type" value="mRNA"/>
</dbReference>
<dbReference type="EMBL" id="BC144394">
    <property type="protein sequence ID" value="AAI44395.1"/>
    <property type="molecule type" value="mRNA"/>
</dbReference>
<dbReference type="EMBL" id="BC171864">
    <property type="protein sequence ID" value="AAI71864.1"/>
    <property type="molecule type" value="mRNA"/>
</dbReference>
<dbReference type="EMBL" id="BC146944">
    <property type="protein sequence ID" value="AAI46945.1"/>
    <property type="molecule type" value="mRNA"/>
</dbReference>
<dbReference type="EMBL" id="BC146958">
    <property type="protein sequence ID" value="AAI46959.1"/>
    <property type="molecule type" value="mRNA"/>
</dbReference>
<dbReference type="PIR" id="C60407">
    <property type="entry name" value="C60407"/>
</dbReference>
<dbReference type="RefSeq" id="NP_001278397.1">
    <molecule id="Q8NHW4-2"/>
    <property type="nucleotide sequence ID" value="NM_001291468.1"/>
</dbReference>
<dbReference type="RefSeq" id="NP_001278398.1">
    <molecule id="Q8NHW4-5"/>
    <property type="nucleotide sequence ID" value="NM_001291469.1"/>
</dbReference>
<dbReference type="RefSeq" id="NP_001278399.1">
    <molecule id="Q8NHW4-5"/>
    <property type="nucleotide sequence ID" value="NM_001291470.1"/>
</dbReference>
<dbReference type="RefSeq" id="NP_001278400.1">
    <molecule id="Q8NHW4-10"/>
    <property type="nucleotide sequence ID" value="NM_001291471.1"/>
</dbReference>
<dbReference type="RefSeq" id="NP_001278401.1">
    <molecule id="Q8NHW4-3"/>
    <property type="nucleotide sequence ID" value="NM_001291472.1"/>
</dbReference>
<dbReference type="RefSeq" id="NP_001278402.1">
    <molecule id="Q8NHW4-6"/>
    <property type="nucleotide sequence ID" value="NM_001291473.1"/>
</dbReference>
<dbReference type="RefSeq" id="NP_001278403.1">
    <molecule id="Q8NHW4-9"/>
    <property type="nucleotide sequence ID" value="NM_001291474.1"/>
</dbReference>
<dbReference type="RefSeq" id="NP_001278404.1">
    <molecule id="Q8NHW4-4"/>
    <property type="nucleotide sequence ID" value="NM_001291475.1"/>
</dbReference>
<dbReference type="RefSeq" id="NP_996890.1">
    <molecule id="Q8NHW4-1"/>
    <property type="nucleotide sequence ID" value="NM_207007.4"/>
</dbReference>
<dbReference type="SMR" id="Q8NHW4"/>
<dbReference type="BioGRID" id="114931">
    <property type="interactions" value="33"/>
</dbReference>
<dbReference type="BioGRID" id="132664">
    <property type="interactions" value="24"/>
</dbReference>
<dbReference type="FunCoup" id="Q8NHW4">
    <property type="interactions" value="907"/>
</dbReference>
<dbReference type="IntAct" id="Q8NHW4">
    <property type="interactions" value="57"/>
</dbReference>
<dbReference type="BioMuta" id="HGNC:10631"/>
<dbReference type="DMDM" id="74727347"/>
<dbReference type="MassIVE" id="Q8NHW4"/>
<dbReference type="PaxDb" id="9606-ENSP00000483609"/>
<dbReference type="PeptideAtlas" id="Q8NHW4"/>
<dbReference type="ProteomicsDB" id="73770">
    <molecule id="Q8NHW4-10"/>
</dbReference>
<dbReference type="ProteomicsDB" id="73776">
    <molecule id="Q8NHW4-7"/>
</dbReference>
<dbReference type="ProteomicsDB" id="73777">
    <molecule id="Q8NHW4-8"/>
</dbReference>
<dbReference type="TopDownProteomics" id="Q8NHW4-4">
    <molecule id="Q8NHW4-4"/>
</dbReference>
<dbReference type="Antibodypedia" id="72750">
    <property type="antibodies" value="107 antibodies from 20 providers"/>
</dbReference>
<dbReference type="DNASU" id="9560"/>
<dbReference type="Ensembl" id="ENST00000610565.4">
    <molecule id="Q8NHW4-6"/>
    <property type="protein sequence ID" value="ENSP00000484498.1"/>
    <property type="gene ID" value="ENSG00000276070.5"/>
</dbReference>
<dbReference type="Ensembl" id="ENST00000613173.4">
    <molecule id="Q8NHW4-9"/>
    <property type="protein sequence ID" value="ENSP00000484455.1"/>
    <property type="gene ID" value="ENSG00000276070.5"/>
</dbReference>
<dbReference type="Ensembl" id="ENST00000613828.3">
    <molecule id="Q8NHW4-2"/>
    <property type="protein sequence ID" value="ENSP00000484322.2"/>
    <property type="gene ID" value="ENSG00000293547.1"/>
</dbReference>
<dbReference type="Ensembl" id="ENST00000614182.4">
    <molecule id="Q8NHW4-3"/>
    <property type="protein sequence ID" value="ENSP00000482862.2"/>
    <property type="gene ID" value="ENSG00000276125.4"/>
</dbReference>
<dbReference type="Ensembl" id="ENST00000615418.4">
    <molecule id="Q8NHW4-3"/>
    <property type="protein sequence ID" value="ENSP00000483206.1"/>
    <property type="gene ID" value="ENSG00000276070.5"/>
</dbReference>
<dbReference type="Ensembl" id="ENST00000616100.4">
    <molecule id="Q8NHW4-6"/>
    <property type="protein sequence ID" value="ENSP00000484148.2"/>
    <property type="gene ID" value="ENSG00000293547.1"/>
</dbReference>
<dbReference type="Ensembl" id="ENST00000617405.5">
    <molecule id="Q8NHW4-4"/>
    <property type="protein sequence ID" value="ENSP00000483330.1"/>
    <property type="gene ID" value="ENSG00000276070.5"/>
</dbReference>
<dbReference type="Ensembl" id="ENST00000617416.4">
    <molecule id="Q8NHW4-5"/>
    <property type="protein sequence ID" value="ENSP00000480089.1"/>
    <property type="gene ID" value="ENSG00000276070.5"/>
</dbReference>
<dbReference type="Ensembl" id="ENST00000620055.4">
    <molecule id="Q8NHW4-7"/>
    <property type="protein sequence ID" value="ENSP00000481323.1"/>
    <property type="gene ID" value="ENSG00000276070.5"/>
</dbReference>
<dbReference type="Ensembl" id="ENST00000620063.3">
    <molecule id="Q8NHW4-1"/>
    <property type="protein sequence ID" value="ENSP00000478376.1"/>
    <property type="gene ID" value="ENSG00000276125.4"/>
</dbReference>
<dbReference type="Ensembl" id="ENST00000620098.4">
    <molecule id="Q8NHW4-10"/>
    <property type="protein sequence ID" value="ENSP00000479774.1"/>
    <property type="gene ID" value="ENSG00000276070.5"/>
</dbReference>
<dbReference type="Ensembl" id="ENST00000620250.1">
    <molecule id="Q8NHW4-1"/>
    <property type="protein sequence ID" value="ENSP00000483609.1"/>
    <property type="gene ID" value="ENSG00000276070.5"/>
</dbReference>
<dbReference type="Ensembl" id="ENST00000620576.5">
    <molecule id="Q8NHW4-2"/>
    <property type="protein sequence ID" value="ENSP00000479354.1"/>
    <property type="gene ID" value="ENSG00000276070.5"/>
</dbReference>
<dbReference type="Ensembl" id="ENST00000620732.4">
    <molecule id="Q8NHW4-5"/>
    <property type="protein sequence ID" value="ENSP00000481969.1"/>
    <property type="gene ID" value="ENSG00000276070.5"/>
</dbReference>
<dbReference type="Ensembl" id="ENST00000622783.2">
    <molecule id="Q8NHW4-7"/>
    <property type="protein sequence ID" value="ENSP00000479833.2"/>
    <property type="gene ID" value="ENSG00000276125.4"/>
</dbReference>
<dbReference type="Ensembl" id="ENST00000631554.1">
    <molecule id="Q8NHW4-10"/>
    <property type="protein sequence ID" value="ENSP00000487911.1"/>
    <property type="gene ID" value="ENSG00000276125.4"/>
</dbReference>
<dbReference type="Ensembl" id="ENST00000631768.1">
    <molecule id="Q8NHW4-5"/>
    <property type="protein sequence ID" value="ENSP00000488094.1"/>
    <property type="gene ID" value="ENSG00000293547.1"/>
</dbReference>
<dbReference type="Ensembl" id="ENST00000631782.1">
    <molecule id="Q8NHW4-6"/>
    <property type="protein sequence ID" value="ENSP00000488541.1"/>
    <property type="gene ID" value="ENSG00000276125.4"/>
</dbReference>
<dbReference type="Ensembl" id="ENST00000631808.2">
    <molecule id="Q8NHW4-3"/>
    <property type="protein sequence ID" value="ENSP00000487651.1"/>
    <property type="gene ID" value="ENSG00000293547.1"/>
</dbReference>
<dbReference type="Ensembl" id="ENST00000632480.1">
    <molecule id="Q8NHW4-7"/>
    <property type="protein sequence ID" value="ENSP00000488369.1"/>
    <property type="gene ID" value="ENSG00000293547.1"/>
</dbReference>
<dbReference type="Ensembl" id="ENST00000632699.1">
    <molecule id="Q8NHW4-2"/>
    <property type="protein sequence ID" value="ENSP00000488366.1"/>
    <property type="gene ID" value="ENSG00000276125.4"/>
</dbReference>
<dbReference type="Ensembl" id="ENST00000633309.2">
    <molecule id="Q8NHW4-4"/>
    <property type="protein sequence ID" value="ENSP00000488719.1"/>
    <property type="gene ID" value="ENSG00000293547.1"/>
</dbReference>
<dbReference type="Ensembl" id="ENST00000633550.1">
    <molecule id="Q8NHW4-5"/>
    <property type="protein sequence ID" value="ENSP00000488736.1"/>
    <property type="gene ID" value="ENSG00000276125.4"/>
</dbReference>
<dbReference type="Ensembl" id="ENST00000633849.1">
    <molecule id="Q8NHW4-10"/>
    <property type="protein sequence ID" value="ENSP00000487792.1"/>
    <property type="gene ID" value="ENSG00000293547.1"/>
</dbReference>
<dbReference type="Ensembl" id="ENST00000633897.1">
    <molecule id="Q8NHW4-5"/>
    <property type="protein sequence ID" value="ENSP00000488897.1"/>
    <property type="gene ID" value="ENSG00000293547.1"/>
</dbReference>
<dbReference type="Ensembl" id="ENST00000633927.1">
    <molecule id="Q8NHW4-9"/>
    <property type="protein sequence ID" value="ENSP00000488430.1"/>
    <property type="gene ID" value="ENSG00000276125.4"/>
</dbReference>
<dbReference type="Ensembl" id="ENST00000634014.2">
    <molecule id="Q8NHW4-1"/>
    <property type="protein sequence ID" value="ENSP00000487961.2"/>
    <property type="gene ID" value="ENSG00000282604.2"/>
</dbReference>
<dbReference type="Ensembl" id="ENST00000634027.1">
    <molecule id="Q8NHW4-4"/>
    <property type="protein sequence ID" value="ENSP00000488439.1"/>
    <property type="gene ID" value="ENSG00000276125.4"/>
</dbReference>
<dbReference type="Ensembl" id="ENST00000634191.1">
    <molecule id="Q8NHW4-5"/>
    <property type="protein sequence ID" value="ENSP00000487715.1"/>
    <property type="gene ID" value="ENSG00000276125.4"/>
</dbReference>
<dbReference type="Ensembl" id="ENST00000713563.1">
    <molecule id="Q8NHW4-9"/>
    <property type="protein sequence ID" value="ENSP00000518856.1"/>
    <property type="gene ID" value="ENSG00000293547.1"/>
</dbReference>
<dbReference type="GeneID" id="388372"/>
<dbReference type="GeneID" id="9560"/>
<dbReference type="KEGG" id="hsa:388372"/>
<dbReference type="KEGG" id="hsa:9560"/>
<dbReference type="MANE-Select" id="ENST00000620576.5">
    <molecule id="Q8NHW4-2"/>
    <property type="protein sequence ID" value="ENSP00000479354.1"/>
    <property type="RefSeq nucleotide sequence ID" value="NM_001291468.2"/>
    <property type="RefSeq protein sequence ID" value="NP_001278397.1"/>
</dbReference>
<dbReference type="MANE-Select" id="ENST00000634014.2">
    <property type="protein sequence ID" value="ENSP00000487961.2"/>
    <property type="RefSeq nucleotide sequence ID" value="NM_207007.4"/>
    <property type="RefSeq protein sequence ID" value="NP_996890.1"/>
</dbReference>
<dbReference type="UCSC" id="uc002hlh.2">
    <molecule id="Q8NHW4-1"/>
    <property type="organism name" value="human"/>
</dbReference>
<dbReference type="AGR" id="HGNC:10631"/>
<dbReference type="AGR" id="HGNC:24066"/>
<dbReference type="CTD" id="388372"/>
<dbReference type="CTD" id="9560"/>
<dbReference type="DisGeNET" id="388372"/>
<dbReference type="DisGeNET" id="9560"/>
<dbReference type="GeneCards" id="CCL4L1"/>
<dbReference type="GeneCards" id="CCL4L2"/>
<dbReference type="HGNC" id="HGNC:10631">
    <property type="gene designation" value="CCL4L1"/>
</dbReference>
<dbReference type="HGNC" id="HGNC:24066">
    <property type="gene designation" value="CCL4L2"/>
</dbReference>
<dbReference type="HPA" id="ENSG00000276070">
    <property type="expression patterns" value="Tissue enhanced (bone marrow, lymphoid tissue)"/>
</dbReference>
<dbReference type="MIM" id="603782">
    <property type="type" value="gene"/>
</dbReference>
<dbReference type="MIM" id="610757">
    <property type="type" value="gene"/>
</dbReference>
<dbReference type="neXtProt" id="NX_Q8NHW4"/>
<dbReference type="OpenTargets" id="ENSG00000276070"/>
<dbReference type="VEuPathDB" id="HostDB:ENSG00000276070"/>
<dbReference type="eggNOG" id="ENOG502S8M4">
    <property type="taxonomic scope" value="Eukaryota"/>
</dbReference>
<dbReference type="GeneTree" id="ENSGT01100000263482"/>
<dbReference type="HOGENOM" id="CLU_2793265_0_0_1"/>
<dbReference type="InParanoid" id="Q8NHW4"/>
<dbReference type="OMA" id="IRTSQRC"/>
<dbReference type="OrthoDB" id="9447832at2759"/>
<dbReference type="PAN-GO" id="Q8NHW4">
    <property type="GO annotations" value="15 GO annotations based on evolutionary models"/>
</dbReference>
<dbReference type="PhylomeDB" id="Q8NHW4"/>
<dbReference type="TreeFam" id="TF334888"/>
<dbReference type="PathwayCommons" id="Q8NHW4"/>
<dbReference type="Reactome" id="R-HSA-418594">
    <property type="pathway name" value="G alpha (i) signalling events"/>
</dbReference>
<dbReference type="SignaLink" id="Q8NHW4"/>
<dbReference type="SIGNOR" id="Q8NHW4"/>
<dbReference type="BioGRID-ORCS" id="388372">
    <property type="hits" value="8 hits in 194 CRISPR screens"/>
</dbReference>
<dbReference type="BioGRID-ORCS" id="9560">
    <property type="hits" value="8 hits in 663 CRISPR screens"/>
</dbReference>
<dbReference type="ChiTaRS" id="CCL4L2">
    <property type="organism name" value="human"/>
</dbReference>
<dbReference type="Pharos" id="Q8NHW4">
    <property type="development level" value="Tbio"/>
</dbReference>
<dbReference type="PRO" id="PR:Q8NHW4"/>
<dbReference type="Proteomes" id="UP000005640">
    <property type="component" value="Chromosome 17"/>
</dbReference>
<dbReference type="RNAct" id="Q8NHW4">
    <property type="molecule type" value="protein"/>
</dbReference>
<dbReference type="Bgee" id="ENSG00000276070">
    <property type="expression patterns" value="Expressed in bone marrow and 103 other cell types or tissues"/>
</dbReference>
<dbReference type="GO" id="GO:0005615">
    <property type="term" value="C:extracellular space"/>
    <property type="evidence" value="ECO:0000318"/>
    <property type="project" value="GO_Central"/>
</dbReference>
<dbReference type="GO" id="GO:0048020">
    <property type="term" value="F:CCR chemokine receptor binding"/>
    <property type="evidence" value="ECO:0000318"/>
    <property type="project" value="GO_Central"/>
</dbReference>
<dbReference type="GO" id="GO:0008009">
    <property type="term" value="F:chemokine activity"/>
    <property type="evidence" value="ECO:0000318"/>
    <property type="project" value="GO_Central"/>
</dbReference>
<dbReference type="GO" id="GO:0061844">
    <property type="term" value="P:antimicrobial humoral immune response mediated by antimicrobial peptide"/>
    <property type="evidence" value="ECO:0000318"/>
    <property type="project" value="GO_Central"/>
</dbReference>
<dbReference type="GO" id="GO:0070098">
    <property type="term" value="P:chemokine-mediated signaling pathway"/>
    <property type="evidence" value="ECO:0000318"/>
    <property type="project" value="GO_Central"/>
</dbReference>
<dbReference type="GO" id="GO:0048245">
    <property type="term" value="P:eosinophil chemotaxis"/>
    <property type="evidence" value="ECO:0000318"/>
    <property type="project" value="GO_Central"/>
</dbReference>
<dbReference type="GO" id="GO:0006954">
    <property type="term" value="P:inflammatory response"/>
    <property type="evidence" value="ECO:0000318"/>
    <property type="project" value="GO_Central"/>
</dbReference>
<dbReference type="GO" id="GO:0030335">
    <property type="term" value="P:positive regulation of cell migration"/>
    <property type="evidence" value="ECO:0000318"/>
    <property type="project" value="GO_Central"/>
</dbReference>
<dbReference type="CDD" id="cd00272">
    <property type="entry name" value="Chemokine_CC"/>
    <property type="match status" value="1"/>
</dbReference>
<dbReference type="FunFam" id="2.40.50.40:FF:000002">
    <property type="entry name" value="C-C motif chemokine"/>
    <property type="match status" value="1"/>
</dbReference>
<dbReference type="Gene3D" id="2.40.50.40">
    <property type="match status" value="1"/>
</dbReference>
<dbReference type="InterPro" id="IPR039809">
    <property type="entry name" value="Chemokine_b/g/d"/>
</dbReference>
<dbReference type="InterPro" id="IPR000827">
    <property type="entry name" value="Chemokine_CC_CS"/>
</dbReference>
<dbReference type="InterPro" id="IPR001811">
    <property type="entry name" value="Chemokine_IL8-like_dom"/>
</dbReference>
<dbReference type="InterPro" id="IPR036048">
    <property type="entry name" value="Interleukin_8-like_sf"/>
</dbReference>
<dbReference type="PANTHER" id="PTHR12015:SF103">
    <property type="entry name" value="C-C MOTIF CHEMOKINE 4-RELATED"/>
    <property type="match status" value="1"/>
</dbReference>
<dbReference type="PANTHER" id="PTHR12015">
    <property type="entry name" value="SMALL INDUCIBLE CYTOKINE A"/>
    <property type="match status" value="1"/>
</dbReference>
<dbReference type="Pfam" id="PF00048">
    <property type="entry name" value="IL8"/>
    <property type="match status" value="1"/>
</dbReference>
<dbReference type="SMART" id="SM00199">
    <property type="entry name" value="SCY"/>
    <property type="match status" value="1"/>
</dbReference>
<dbReference type="SUPFAM" id="SSF54117">
    <property type="entry name" value="Interleukin 8-like chemokines"/>
    <property type="match status" value="1"/>
</dbReference>
<dbReference type="PROSITE" id="PS00472">
    <property type="entry name" value="SMALL_CYTOKINES_CC"/>
    <property type="match status" value="1"/>
</dbReference>
<keyword id="KW-0025">Alternative splicing</keyword>
<keyword id="KW-0145">Chemotaxis</keyword>
<keyword id="KW-0202">Cytokine</keyword>
<keyword id="KW-1015">Disulfide bond</keyword>
<keyword id="KW-0395">Inflammatory response</keyword>
<keyword id="KW-1267">Proteomics identification</keyword>
<keyword id="KW-1185">Reference proteome</keyword>
<keyword id="KW-0964">Secreted</keyword>
<keyword id="KW-0732">Signal</keyword>
<gene>
    <name type="primary">CCL4L1</name>
    <name type="synonym">CCL4L</name>
    <name type="synonym">LAG1</name>
    <name type="synonym">SCYA4L1</name>
</gene>
<gene>
    <name type="primary">CCL4L2</name>
    <name type="synonym">CCL4L</name>
    <name type="synonym">SCYA4L2</name>
</gene>
<sequence>MKLCVTVLSLLVLVAAFCSLALSAPMGSDPPTACCFSYTARKLPRNFVVDYYETSSLCSQPAVVFQTKRGKQVCADPSESWVQEYVYDLELN</sequence>
<accession>Q8NHW4</accession>
<accession>B2RUZ3</accession>
<accession>B7ZMA8</accession>
<accession>Q50EM1</accession>
<accession>Q50EM2</accession>
<accession>Q50EM3</accession>
<accession>Q50EM4</accession>
<accession>Q50EM5</accession>
<accession>Q50EM6</accession>
<accession>Q50EM7</accession>
<accession>Q50EM8</accession>
<accession>Q569J2</accession>
<accession>Q6NSB0</accession>